<gene>
    <name evidence="1" type="primary">mnmA</name>
    <name type="ordered locus">AB57_2866</name>
</gene>
<name>MNMA_ACIB5</name>
<organism>
    <name type="scientific">Acinetobacter baumannii (strain AB0057)</name>
    <dbReference type="NCBI Taxonomy" id="480119"/>
    <lineage>
        <taxon>Bacteria</taxon>
        <taxon>Pseudomonadati</taxon>
        <taxon>Pseudomonadota</taxon>
        <taxon>Gammaproteobacteria</taxon>
        <taxon>Moraxellales</taxon>
        <taxon>Moraxellaceae</taxon>
        <taxon>Acinetobacter</taxon>
        <taxon>Acinetobacter calcoaceticus/baumannii complex</taxon>
    </lineage>
</organism>
<dbReference type="EC" id="2.8.1.13" evidence="1"/>
<dbReference type="EMBL" id="CP001182">
    <property type="protein sequence ID" value="ACJ42214.1"/>
    <property type="molecule type" value="Genomic_DNA"/>
</dbReference>
<dbReference type="RefSeq" id="WP_001187604.1">
    <property type="nucleotide sequence ID" value="NC_011586.2"/>
</dbReference>
<dbReference type="SMR" id="B7I4K8"/>
<dbReference type="GeneID" id="92894744"/>
<dbReference type="KEGG" id="abn:AB57_2866"/>
<dbReference type="HOGENOM" id="CLU_035188_1_0_6"/>
<dbReference type="Proteomes" id="UP000007094">
    <property type="component" value="Chromosome"/>
</dbReference>
<dbReference type="GO" id="GO:0005737">
    <property type="term" value="C:cytoplasm"/>
    <property type="evidence" value="ECO:0007669"/>
    <property type="project" value="UniProtKB-SubCell"/>
</dbReference>
<dbReference type="GO" id="GO:0005524">
    <property type="term" value="F:ATP binding"/>
    <property type="evidence" value="ECO:0007669"/>
    <property type="project" value="UniProtKB-KW"/>
</dbReference>
<dbReference type="GO" id="GO:0000049">
    <property type="term" value="F:tRNA binding"/>
    <property type="evidence" value="ECO:0007669"/>
    <property type="project" value="UniProtKB-KW"/>
</dbReference>
<dbReference type="GO" id="GO:0103016">
    <property type="term" value="F:tRNA-uridine 2-sulfurtransferase activity"/>
    <property type="evidence" value="ECO:0007669"/>
    <property type="project" value="UniProtKB-EC"/>
</dbReference>
<dbReference type="GO" id="GO:0002143">
    <property type="term" value="P:tRNA wobble position uridine thiolation"/>
    <property type="evidence" value="ECO:0007669"/>
    <property type="project" value="TreeGrafter"/>
</dbReference>
<dbReference type="CDD" id="cd01998">
    <property type="entry name" value="MnmA_TRMU-like"/>
    <property type="match status" value="1"/>
</dbReference>
<dbReference type="FunFam" id="2.30.30.280:FF:000001">
    <property type="entry name" value="tRNA-specific 2-thiouridylase MnmA"/>
    <property type="match status" value="1"/>
</dbReference>
<dbReference type="FunFam" id="2.40.30.10:FF:000023">
    <property type="entry name" value="tRNA-specific 2-thiouridylase MnmA"/>
    <property type="match status" value="1"/>
</dbReference>
<dbReference type="FunFam" id="3.40.50.620:FF:000004">
    <property type="entry name" value="tRNA-specific 2-thiouridylase MnmA"/>
    <property type="match status" value="1"/>
</dbReference>
<dbReference type="Gene3D" id="2.30.30.280">
    <property type="entry name" value="Adenine nucleotide alpha hydrolases-like domains"/>
    <property type="match status" value="1"/>
</dbReference>
<dbReference type="Gene3D" id="3.40.50.620">
    <property type="entry name" value="HUPs"/>
    <property type="match status" value="1"/>
</dbReference>
<dbReference type="Gene3D" id="2.40.30.10">
    <property type="entry name" value="Translation factors"/>
    <property type="match status" value="1"/>
</dbReference>
<dbReference type="HAMAP" id="MF_00144">
    <property type="entry name" value="tRNA_thiouridyl_MnmA"/>
    <property type="match status" value="1"/>
</dbReference>
<dbReference type="InterPro" id="IPR004506">
    <property type="entry name" value="MnmA-like"/>
</dbReference>
<dbReference type="InterPro" id="IPR046885">
    <property type="entry name" value="MnmA-like_C"/>
</dbReference>
<dbReference type="InterPro" id="IPR046884">
    <property type="entry name" value="MnmA-like_central"/>
</dbReference>
<dbReference type="InterPro" id="IPR023382">
    <property type="entry name" value="MnmA-like_central_sf"/>
</dbReference>
<dbReference type="InterPro" id="IPR014729">
    <property type="entry name" value="Rossmann-like_a/b/a_fold"/>
</dbReference>
<dbReference type="NCBIfam" id="NF001138">
    <property type="entry name" value="PRK00143.1"/>
    <property type="match status" value="1"/>
</dbReference>
<dbReference type="NCBIfam" id="TIGR00420">
    <property type="entry name" value="trmU"/>
    <property type="match status" value="1"/>
</dbReference>
<dbReference type="PANTHER" id="PTHR11933:SF5">
    <property type="entry name" value="MITOCHONDRIAL TRNA-SPECIFIC 2-THIOURIDYLASE 1"/>
    <property type="match status" value="1"/>
</dbReference>
<dbReference type="PANTHER" id="PTHR11933">
    <property type="entry name" value="TRNA 5-METHYLAMINOMETHYL-2-THIOURIDYLATE -METHYLTRANSFERASE"/>
    <property type="match status" value="1"/>
</dbReference>
<dbReference type="Pfam" id="PF03054">
    <property type="entry name" value="tRNA_Me_trans"/>
    <property type="match status" value="1"/>
</dbReference>
<dbReference type="Pfam" id="PF20258">
    <property type="entry name" value="tRNA_Me_trans_C"/>
    <property type="match status" value="1"/>
</dbReference>
<dbReference type="Pfam" id="PF20259">
    <property type="entry name" value="tRNA_Me_trans_M"/>
    <property type="match status" value="1"/>
</dbReference>
<dbReference type="SUPFAM" id="SSF52402">
    <property type="entry name" value="Adenine nucleotide alpha hydrolases-like"/>
    <property type="match status" value="1"/>
</dbReference>
<sequence>MQQRVIVGMSGGVDSSVSAALLLQQGYQVEGLFMKNWEEDDGTEYCTAMEDLADAQAVADKIGIKLHTANFAMEYWDRVFEHFLAEYAAGRTPNPDILCNKEIKFRAFLDHAMTLGADFIATGHYARRAETAYNSKGEAYAPLLRGLDNNKDQTYFLHAVHGREINKTLFPVGEIEKPEVRRIAEELDLATAKKKDSTGICFIGERRFNDFLKQYLPAQPGKIVLDNGKEVGEHHGLMYYTLGQRGGIGLGGMKGASEGAWFVLHKDVANNRLVVGQGHDHPLMQSTQLWSEAIDWVAGEQNIPAEGLRCTAKTRYRQPDQACTVFIDENSEHGVRVEFDEPQRAVTPGQSVVFYSDEVCLGGGVIHHTNAPTPNFI</sequence>
<proteinExistence type="inferred from homology"/>
<accession>B7I4K8</accession>
<comment type="function">
    <text evidence="1">Catalyzes the 2-thiolation of uridine at the wobble position (U34) of tRNA, leading to the formation of s(2)U34.</text>
</comment>
<comment type="catalytic activity">
    <reaction evidence="1">
        <text>S-sulfanyl-L-cysteinyl-[protein] + uridine(34) in tRNA + AH2 + ATP = 2-thiouridine(34) in tRNA + L-cysteinyl-[protein] + A + AMP + diphosphate + H(+)</text>
        <dbReference type="Rhea" id="RHEA:47032"/>
        <dbReference type="Rhea" id="RHEA-COMP:10131"/>
        <dbReference type="Rhea" id="RHEA-COMP:11726"/>
        <dbReference type="Rhea" id="RHEA-COMP:11727"/>
        <dbReference type="Rhea" id="RHEA-COMP:11728"/>
        <dbReference type="ChEBI" id="CHEBI:13193"/>
        <dbReference type="ChEBI" id="CHEBI:15378"/>
        <dbReference type="ChEBI" id="CHEBI:17499"/>
        <dbReference type="ChEBI" id="CHEBI:29950"/>
        <dbReference type="ChEBI" id="CHEBI:30616"/>
        <dbReference type="ChEBI" id="CHEBI:33019"/>
        <dbReference type="ChEBI" id="CHEBI:61963"/>
        <dbReference type="ChEBI" id="CHEBI:65315"/>
        <dbReference type="ChEBI" id="CHEBI:87170"/>
        <dbReference type="ChEBI" id="CHEBI:456215"/>
        <dbReference type="EC" id="2.8.1.13"/>
    </reaction>
</comment>
<comment type="subcellular location">
    <subcellularLocation>
        <location evidence="1">Cytoplasm</location>
    </subcellularLocation>
</comment>
<comment type="similarity">
    <text evidence="1">Belongs to the MnmA/TRMU family.</text>
</comment>
<keyword id="KW-0067">ATP-binding</keyword>
<keyword id="KW-0963">Cytoplasm</keyword>
<keyword id="KW-1015">Disulfide bond</keyword>
<keyword id="KW-0547">Nucleotide-binding</keyword>
<keyword id="KW-0694">RNA-binding</keyword>
<keyword id="KW-0808">Transferase</keyword>
<keyword id="KW-0819">tRNA processing</keyword>
<keyword id="KW-0820">tRNA-binding</keyword>
<feature type="chain" id="PRO_1000198597" description="tRNA-specific 2-thiouridylase MnmA">
    <location>
        <begin position="1"/>
        <end position="377"/>
    </location>
</feature>
<feature type="region of interest" description="Interaction with target base in tRNA" evidence="1">
    <location>
        <begin position="94"/>
        <end position="96"/>
    </location>
</feature>
<feature type="region of interest" description="Interaction with tRNA" evidence="1">
    <location>
        <begin position="151"/>
        <end position="153"/>
    </location>
</feature>
<feature type="region of interest" description="Interaction with tRNA" evidence="1">
    <location>
        <begin position="315"/>
        <end position="316"/>
    </location>
</feature>
<feature type="active site" description="Nucleophile" evidence="1">
    <location>
        <position position="99"/>
    </location>
</feature>
<feature type="active site" description="Cysteine persulfide intermediate" evidence="1">
    <location>
        <position position="201"/>
    </location>
</feature>
<feature type="binding site" evidence="1">
    <location>
        <begin position="8"/>
        <end position="15"/>
    </location>
    <ligand>
        <name>ATP</name>
        <dbReference type="ChEBI" id="CHEBI:30616"/>
    </ligand>
</feature>
<feature type="binding site" evidence="1">
    <location>
        <position position="34"/>
    </location>
    <ligand>
        <name>ATP</name>
        <dbReference type="ChEBI" id="CHEBI:30616"/>
    </ligand>
</feature>
<feature type="binding site" evidence="1">
    <location>
        <position position="123"/>
    </location>
    <ligand>
        <name>ATP</name>
        <dbReference type="ChEBI" id="CHEBI:30616"/>
    </ligand>
</feature>
<feature type="site" description="Interaction with tRNA" evidence="1">
    <location>
        <position position="124"/>
    </location>
</feature>
<feature type="site" description="Interaction with tRNA" evidence="1">
    <location>
        <position position="350"/>
    </location>
</feature>
<feature type="disulfide bond" description="Alternate" evidence="1">
    <location>
        <begin position="99"/>
        <end position="201"/>
    </location>
</feature>
<reference key="1">
    <citation type="journal article" date="2008" name="J. Bacteriol.">
        <title>Comparative genome sequence analysis of multidrug-resistant Acinetobacter baumannii.</title>
        <authorList>
            <person name="Adams M.D."/>
            <person name="Goglin K."/>
            <person name="Molyneaux N."/>
            <person name="Hujer K.M."/>
            <person name="Lavender H."/>
            <person name="Jamison J.J."/>
            <person name="MacDonald I.J."/>
            <person name="Martin K.M."/>
            <person name="Russo T."/>
            <person name="Campagnari A.A."/>
            <person name="Hujer A.M."/>
            <person name="Bonomo R.A."/>
            <person name="Gill S.R."/>
        </authorList>
    </citation>
    <scope>NUCLEOTIDE SEQUENCE [LARGE SCALE GENOMIC DNA]</scope>
    <source>
        <strain>AB0057</strain>
    </source>
</reference>
<evidence type="ECO:0000255" key="1">
    <source>
        <dbReference type="HAMAP-Rule" id="MF_00144"/>
    </source>
</evidence>
<protein>
    <recommendedName>
        <fullName evidence="1">tRNA-specific 2-thiouridylase MnmA</fullName>
        <ecNumber evidence="1">2.8.1.13</ecNumber>
    </recommendedName>
</protein>